<sequence length="143" mass="16196">MLTTAKANPLEALRSAKENKELSGQLEHHRSLRAIKLKVLLYREEREAAGVPPDVISRECATLHGSLLRNYMEEAQEARRLGAAELAQKTAERFASAFQVRPGSLGDAFDRRHREVERQAAEGARKEAIERRIVERVKRIKGE</sequence>
<feature type="chain" id="PRO_0000403784" description="Pre-mRNA-splicing factor U5-Cwc21">
    <location>
        <begin position="1"/>
        <end position="143"/>
    </location>
</feature>
<feature type="domain" description="CWF21" evidence="2">
    <location>
        <begin position="27"/>
        <end position="70"/>
    </location>
</feature>
<reference key="1">
    <citation type="journal article" date="2005" name="Science">
        <title>The genome of the African trypanosome Trypanosoma brucei.</title>
        <authorList>
            <person name="Berriman M."/>
            <person name="Ghedin E."/>
            <person name="Hertz-Fowler C."/>
            <person name="Blandin G."/>
            <person name="Renauld H."/>
            <person name="Bartholomeu D.C."/>
            <person name="Lennard N.J."/>
            <person name="Caler E."/>
            <person name="Hamlin N.E."/>
            <person name="Haas B."/>
            <person name="Bohme U."/>
            <person name="Hannick L."/>
            <person name="Aslett M.A."/>
            <person name="Shallom J."/>
            <person name="Marcello L."/>
            <person name="Hou L."/>
            <person name="Wickstead B."/>
            <person name="Alsmark U.C.M."/>
            <person name="Arrowsmith C."/>
            <person name="Atkin R.J."/>
            <person name="Barron A.J."/>
            <person name="Bringaud F."/>
            <person name="Brooks K."/>
            <person name="Carrington M."/>
            <person name="Cherevach I."/>
            <person name="Chillingworth T.J."/>
            <person name="Churcher C."/>
            <person name="Clark L.N."/>
            <person name="Corton C.H."/>
            <person name="Cronin A."/>
            <person name="Davies R.M."/>
            <person name="Doggett J."/>
            <person name="Djikeng A."/>
            <person name="Feldblyum T."/>
            <person name="Field M.C."/>
            <person name="Fraser A."/>
            <person name="Goodhead I."/>
            <person name="Hance Z."/>
            <person name="Harper D."/>
            <person name="Harris B.R."/>
            <person name="Hauser H."/>
            <person name="Hostetler J."/>
            <person name="Ivens A."/>
            <person name="Jagels K."/>
            <person name="Johnson D."/>
            <person name="Johnson J."/>
            <person name="Jones K."/>
            <person name="Kerhornou A.X."/>
            <person name="Koo H."/>
            <person name="Larke N."/>
            <person name="Landfear S."/>
            <person name="Larkin C."/>
            <person name="Leech V."/>
            <person name="Line A."/>
            <person name="Lord A."/>
            <person name="Macleod A."/>
            <person name="Mooney P.J."/>
            <person name="Moule S."/>
            <person name="Martin D.M."/>
            <person name="Morgan G.W."/>
            <person name="Mungall K."/>
            <person name="Norbertczak H."/>
            <person name="Ormond D."/>
            <person name="Pai G."/>
            <person name="Peacock C.S."/>
            <person name="Peterson J."/>
            <person name="Quail M.A."/>
            <person name="Rabbinowitsch E."/>
            <person name="Rajandream M.A."/>
            <person name="Reitter C."/>
            <person name="Salzberg S.L."/>
            <person name="Sanders M."/>
            <person name="Schobel S."/>
            <person name="Sharp S."/>
            <person name="Simmonds M."/>
            <person name="Simpson A.J."/>
            <person name="Tallon L."/>
            <person name="Turner C.M."/>
            <person name="Tait A."/>
            <person name="Tivey A.R."/>
            <person name="Van Aken S."/>
            <person name="Walker D."/>
            <person name="Wanless D."/>
            <person name="Wang S."/>
            <person name="White B."/>
            <person name="White O."/>
            <person name="Whitehead S."/>
            <person name="Woodward J."/>
            <person name="Wortman J."/>
            <person name="Adams M.D."/>
            <person name="Embley T.M."/>
            <person name="Gull K."/>
            <person name="Ullu E."/>
            <person name="Barry J.D."/>
            <person name="Fairlamb A.H."/>
            <person name="Opperdoes F."/>
            <person name="Barrell B.G."/>
            <person name="Donelson J.E."/>
            <person name="Hall N."/>
            <person name="Fraser C.M."/>
            <person name="Melville S.E."/>
            <person name="El-Sayed N.M.A."/>
        </authorList>
    </citation>
    <scope>NUCLEOTIDE SEQUENCE [LARGE SCALE GENOMIC DNA]</scope>
    <source>
        <strain evidence="5">927/4 GUTat10.1</strain>
    </source>
</reference>
<reference key="2">
    <citation type="journal article" date="2009" name="Eukaryot. Cell">
        <title>Spliceosomal proteomics in Trypanosoma brucei reveal new RNA splicing factors.</title>
        <authorList>
            <person name="Luz Ambrosio D."/>
            <person name="Lee J.H."/>
            <person name="Panigrahi A.K."/>
            <person name="Nguyen T.N."/>
            <person name="Cicarelli R.M."/>
            <person name="Gunzl A."/>
        </authorList>
    </citation>
    <scope>FUNCTION</scope>
    <scope>SUBUNIT</scope>
    <scope>SUBCELLULAR LOCATION</scope>
</reference>
<evidence type="ECO:0000250" key="1"/>
<evidence type="ECO:0000255" key="2"/>
<evidence type="ECO:0000269" key="3">
    <source>
    </source>
</evidence>
<evidence type="ECO:0000305" key="4"/>
<evidence type="ECO:0000312" key="5">
    <source>
        <dbReference type="Proteomes" id="UP000008524"/>
    </source>
</evidence>
<accession>Q38FI2</accession>
<gene>
    <name type="ORF">Tb09.160.2110</name>
</gene>
<dbReference type="EMBL" id="CM000207">
    <property type="protein sequence ID" value="EAN76438.1"/>
    <property type="molecule type" value="Genomic_DNA"/>
</dbReference>
<dbReference type="RefSeq" id="XP_803652.1">
    <property type="nucleotide sequence ID" value="XM_798559.1"/>
</dbReference>
<dbReference type="SMR" id="Q38FI2"/>
<dbReference type="STRING" id="185431.Q38FI2"/>
<dbReference type="PaxDb" id="5691-EAN76438"/>
<dbReference type="GeneID" id="3660114"/>
<dbReference type="KEGG" id="tbr:Tb09.160.2110"/>
<dbReference type="eggNOG" id="ENOG502S6AD">
    <property type="taxonomic scope" value="Eukaryota"/>
</dbReference>
<dbReference type="InParanoid" id="Q38FI2"/>
<dbReference type="OMA" id="RECGELY"/>
<dbReference type="OrthoDB" id="10267305at2759"/>
<dbReference type="Proteomes" id="UP000008524">
    <property type="component" value="Chromosome 9"/>
</dbReference>
<dbReference type="GO" id="GO:0005829">
    <property type="term" value="C:cytosol"/>
    <property type="evidence" value="ECO:0000269"/>
    <property type="project" value="GeneDB"/>
</dbReference>
<dbReference type="GO" id="GO:0005634">
    <property type="term" value="C:nucleus"/>
    <property type="evidence" value="ECO:0000314"/>
    <property type="project" value="GeneDB"/>
</dbReference>
<dbReference type="GO" id="GO:0097525">
    <property type="term" value="C:spliceosomal snRNP complex"/>
    <property type="evidence" value="ECO:0000353"/>
    <property type="project" value="GeneDB"/>
</dbReference>
<dbReference type="GO" id="GO:0000398">
    <property type="term" value="P:mRNA splicing, via spliceosome"/>
    <property type="evidence" value="ECO:0000353"/>
    <property type="project" value="GeneDB"/>
</dbReference>
<dbReference type="GO" id="GO:0008380">
    <property type="term" value="P:RNA splicing"/>
    <property type="evidence" value="ECO:0000315"/>
    <property type="project" value="GeneDB"/>
</dbReference>
<dbReference type="InterPro" id="IPR013170">
    <property type="entry name" value="mRNA_splic_Cwf21_dom"/>
</dbReference>
<dbReference type="SMART" id="SM01115">
    <property type="entry name" value="cwf21"/>
    <property type="match status" value="1"/>
</dbReference>
<protein>
    <recommendedName>
        <fullName>Pre-mRNA-splicing factor U5-Cwc21</fullName>
    </recommendedName>
</protein>
<proteinExistence type="evidence at protein level"/>
<keyword id="KW-0963">Cytoplasm</keyword>
<keyword id="KW-0539">Nucleus</keyword>
<keyword id="KW-1185">Reference proteome</keyword>
<name>CWC21_TRYB2</name>
<organism>
    <name type="scientific">Trypanosoma brucei brucei (strain 927/4 GUTat10.1)</name>
    <dbReference type="NCBI Taxonomy" id="185431"/>
    <lineage>
        <taxon>Eukaryota</taxon>
        <taxon>Discoba</taxon>
        <taxon>Euglenozoa</taxon>
        <taxon>Kinetoplastea</taxon>
        <taxon>Metakinetoplastina</taxon>
        <taxon>Trypanosomatida</taxon>
        <taxon>Trypanosomatidae</taxon>
        <taxon>Trypanosoma</taxon>
    </lineage>
</organism>
<comment type="function">
    <text evidence="3">Essential protein involved in pre-mRNA cis- and trans-splicing. May function at or prior to the first catalytic step of splicing at the catalytic center of the spliceosome. May do so by stabilizing the catalytic center or the position of the RNA substrate.</text>
</comment>
<comment type="subunit">
    <text evidence="1 3">Associates with the NTC complex (or PRP19-associated complex) (By similarity). The NTC complex associates with the spliceosome after the release of the U1 and U4 snRNAs and forms the CWC spliceosome subcomplex reminiscent of a late-stage spliceosome (By similarity). Associates specifically with U5-containing snRNPs.</text>
</comment>
<comment type="subcellular location">
    <subcellularLocation>
        <location evidence="3">Cytoplasm</location>
    </subcellularLocation>
    <subcellularLocation>
        <location evidence="3">Nucleus</location>
    </subcellularLocation>
    <text>Found predominantly in the nucleus.</text>
</comment>
<comment type="similarity">
    <text evidence="4">Belongs to the CWC21 family.</text>
</comment>